<keyword id="KW-0175">Coiled coil</keyword>
<keyword id="KW-0256">Endoplasmic reticulum</keyword>
<keyword id="KW-0472">Membrane</keyword>
<keyword id="KW-1185">Reference proteome</keyword>
<keyword id="KW-0812">Transmembrane</keyword>
<keyword id="KW-1133">Transmembrane helix</keyword>
<keyword id="KW-0813">Transport</keyword>
<gene>
    <name type="primary">get-1</name>
    <name type="ORF">NCU10034</name>
</gene>
<organism>
    <name type="scientific">Neurospora crassa (strain ATCC 24698 / 74-OR23-1A / CBS 708.71 / DSM 1257 / FGSC 987)</name>
    <dbReference type="NCBI Taxonomy" id="367110"/>
    <lineage>
        <taxon>Eukaryota</taxon>
        <taxon>Fungi</taxon>
        <taxon>Dikarya</taxon>
        <taxon>Ascomycota</taxon>
        <taxon>Pezizomycotina</taxon>
        <taxon>Sordariomycetes</taxon>
        <taxon>Sordariomycetidae</taxon>
        <taxon>Sordariales</taxon>
        <taxon>Sordariaceae</taxon>
        <taxon>Neurospora</taxon>
    </lineage>
</organism>
<dbReference type="EMBL" id="CM002237">
    <property type="protein sequence ID" value="EAA28735.1"/>
    <property type="molecule type" value="Genomic_DNA"/>
</dbReference>
<dbReference type="RefSeq" id="XP_957971.1">
    <property type="nucleotide sequence ID" value="XM_952878.3"/>
</dbReference>
<dbReference type="SMR" id="Q7S0A1"/>
<dbReference type="FunCoup" id="Q7S0A1">
    <property type="interactions" value="25"/>
</dbReference>
<dbReference type="STRING" id="367110.Q7S0A1"/>
<dbReference type="PaxDb" id="5141-EFNCRP00000009705"/>
<dbReference type="EnsemblFungi" id="EAA28735">
    <property type="protein sequence ID" value="EAA28735"/>
    <property type="gene ID" value="NCU10034"/>
</dbReference>
<dbReference type="GeneID" id="3874118"/>
<dbReference type="KEGG" id="ncr:NCU10034"/>
<dbReference type="VEuPathDB" id="FungiDB:NCU10034"/>
<dbReference type="HOGENOM" id="CLU_089418_1_0_1"/>
<dbReference type="InParanoid" id="Q7S0A1"/>
<dbReference type="OMA" id="AEWIISF"/>
<dbReference type="OrthoDB" id="69461at2759"/>
<dbReference type="Proteomes" id="UP000001805">
    <property type="component" value="Chromosome 6, Linkage Group II"/>
</dbReference>
<dbReference type="GO" id="GO:0005789">
    <property type="term" value="C:endoplasmic reticulum membrane"/>
    <property type="evidence" value="ECO:0007669"/>
    <property type="project" value="UniProtKB-SubCell"/>
</dbReference>
<dbReference type="GO" id="GO:0043529">
    <property type="term" value="C:GET complex"/>
    <property type="evidence" value="ECO:0000318"/>
    <property type="project" value="GO_Central"/>
</dbReference>
<dbReference type="GO" id="GO:0043495">
    <property type="term" value="F:protein-membrane adaptor activity"/>
    <property type="evidence" value="ECO:0000318"/>
    <property type="project" value="GO_Central"/>
</dbReference>
<dbReference type="GO" id="GO:0071816">
    <property type="term" value="P:tail-anchored membrane protein insertion into ER membrane"/>
    <property type="evidence" value="ECO:0000318"/>
    <property type="project" value="GO_Central"/>
</dbReference>
<dbReference type="FunFam" id="1.10.287.660:FF:000006">
    <property type="entry name" value="Protein GET1"/>
    <property type="match status" value="1"/>
</dbReference>
<dbReference type="Gene3D" id="1.10.287.660">
    <property type="entry name" value="Helix hairpin bin"/>
    <property type="match status" value="1"/>
</dbReference>
<dbReference type="HAMAP" id="MF_03113">
    <property type="entry name" value="Get1"/>
    <property type="match status" value="1"/>
</dbReference>
<dbReference type="InterPro" id="IPR028945">
    <property type="entry name" value="Get1"/>
</dbReference>
<dbReference type="InterPro" id="IPR027538">
    <property type="entry name" value="Get1_fungi"/>
</dbReference>
<dbReference type="InterPro" id="IPR029012">
    <property type="entry name" value="Helix_hairpin_bin_sf"/>
</dbReference>
<dbReference type="PANTHER" id="PTHR42650:SF1">
    <property type="entry name" value="GUIDED ENTRY OF TAIL-ANCHORED PROTEINS FACTOR 1"/>
    <property type="match status" value="1"/>
</dbReference>
<dbReference type="PANTHER" id="PTHR42650">
    <property type="entry name" value="TAIL-ANCHORED PROTEIN INSERTION RECEPTOR WRB"/>
    <property type="match status" value="1"/>
</dbReference>
<dbReference type="Pfam" id="PF04420">
    <property type="entry name" value="CHD5"/>
    <property type="match status" value="1"/>
</dbReference>
<proteinExistence type="inferred from homology"/>
<comment type="function">
    <text evidence="1">Required for the post-translational delivery of tail-anchored (TA) proteins to the endoplasmic reticulum. Acts as a membrane receptor for soluble GET3, which recognizes and selectively binds the transmembrane domain of TA proteins in the cytosol.</text>
</comment>
<comment type="subunit">
    <text evidence="1">Interacts with GET3.</text>
</comment>
<comment type="subcellular location">
    <subcellularLocation>
        <location evidence="1">Endoplasmic reticulum membrane</location>
        <topology evidence="1">Multi-pass membrane protein</topology>
    </subcellularLocation>
</comment>
<comment type="similarity">
    <text evidence="1">Belongs to the WRB/GET1 family.</text>
</comment>
<evidence type="ECO:0000255" key="1">
    <source>
        <dbReference type="HAMAP-Rule" id="MF_03113"/>
    </source>
</evidence>
<evidence type="ECO:0000256" key="2">
    <source>
        <dbReference type="SAM" id="MobiDB-lite"/>
    </source>
</evidence>
<reference key="1">
    <citation type="journal article" date="2003" name="Nature">
        <title>The genome sequence of the filamentous fungus Neurospora crassa.</title>
        <authorList>
            <person name="Galagan J.E."/>
            <person name="Calvo S.E."/>
            <person name="Borkovich K.A."/>
            <person name="Selker E.U."/>
            <person name="Read N.D."/>
            <person name="Jaffe D.B."/>
            <person name="FitzHugh W."/>
            <person name="Ma L.-J."/>
            <person name="Smirnov S."/>
            <person name="Purcell S."/>
            <person name="Rehman B."/>
            <person name="Elkins T."/>
            <person name="Engels R."/>
            <person name="Wang S."/>
            <person name="Nielsen C.B."/>
            <person name="Butler J."/>
            <person name="Endrizzi M."/>
            <person name="Qui D."/>
            <person name="Ianakiev P."/>
            <person name="Bell-Pedersen D."/>
            <person name="Nelson M.A."/>
            <person name="Werner-Washburne M."/>
            <person name="Selitrennikoff C.P."/>
            <person name="Kinsey J.A."/>
            <person name="Braun E.L."/>
            <person name="Zelter A."/>
            <person name="Schulte U."/>
            <person name="Kothe G.O."/>
            <person name="Jedd G."/>
            <person name="Mewes H.-W."/>
            <person name="Staben C."/>
            <person name="Marcotte E."/>
            <person name="Greenberg D."/>
            <person name="Roy A."/>
            <person name="Foley K."/>
            <person name="Naylor J."/>
            <person name="Stange-Thomann N."/>
            <person name="Barrett R."/>
            <person name="Gnerre S."/>
            <person name="Kamal M."/>
            <person name="Kamvysselis M."/>
            <person name="Mauceli E.W."/>
            <person name="Bielke C."/>
            <person name="Rudd S."/>
            <person name="Frishman D."/>
            <person name="Krystofova S."/>
            <person name="Rasmussen C."/>
            <person name="Metzenberg R.L."/>
            <person name="Perkins D.D."/>
            <person name="Kroken S."/>
            <person name="Cogoni C."/>
            <person name="Macino G."/>
            <person name="Catcheside D.E.A."/>
            <person name="Li W."/>
            <person name="Pratt R.J."/>
            <person name="Osmani S.A."/>
            <person name="DeSouza C.P.C."/>
            <person name="Glass N.L."/>
            <person name="Orbach M.J."/>
            <person name="Berglund J.A."/>
            <person name="Voelker R."/>
            <person name="Yarden O."/>
            <person name="Plamann M."/>
            <person name="Seiler S."/>
            <person name="Dunlap J.C."/>
            <person name="Radford A."/>
            <person name="Aramayo R."/>
            <person name="Natvig D.O."/>
            <person name="Alex L.A."/>
            <person name="Mannhaupt G."/>
            <person name="Ebbole D.J."/>
            <person name="Freitag M."/>
            <person name="Paulsen I."/>
            <person name="Sachs M.S."/>
            <person name="Lander E.S."/>
            <person name="Nusbaum C."/>
            <person name="Birren B.W."/>
        </authorList>
    </citation>
    <scope>NUCLEOTIDE SEQUENCE [LARGE SCALE GENOMIC DNA]</scope>
    <source>
        <strain>ATCC 24698 / 74-OR23-1A / CBS 708.71 / DSM 1257 / FGSC 987</strain>
    </source>
</reference>
<feature type="chain" id="PRO_0000388603" description="Protein get-1">
    <location>
        <begin position="1"/>
        <end position="214"/>
    </location>
</feature>
<feature type="topological domain" description="Lumenal" evidence="1">
    <location>
        <begin position="1"/>
        <end position="4"/>
    </location>
</feature>
<feature type="transmembrane region" description="Helical" evidence="1">
    <location>
        <begin position="5"/>
        <end position="24"/>
    </location>
</feature>
<feature type="topological domain" description="Cytoplasmic" evidence="1">
    <location>
        <begin position="25"/>
        <end position="110"/>
    </location>
</feature>
<feature type="transmembrane region" description="Helical" evidence="1">
    <location>
        <begin position="111"/>
        <end position="131"/>
    </location>
</feature>
<feature type="topological domain" description="Lumenal" evidence="1">
    <location>
        <begin position="132"/>
        <end position="155"/>
    </location>
</feature>
<feature type="transmembrane region" description="Helical" evidence="1">
    <location>
        <begin position="156"/>
        <end position="172"/>
    </location>
</feature>
<feature type="topological domain" description="Cytoplasmic" evidence="1">
    <location>
        <begin position="173"/>
        <end position="214"/>
    </location>
</feature>
<feature type="region of interest" description="Disordered" evidence="2">
    <location>
        <begin position="190"/>
        <end position="214"/>
    </location>
</feature>
<feature type="coiled-coil region" evidence="1">
    <location>
        <begin position="73"/>
        <end position="107"/>
    </location>
</feature>
<accession>Q7S0A1</accession>
<protein>
    <recommendedName>
        <fullName evidence="1">Protein get-1</fullName>
    </recommendedName>
    <alternativeName>
        <fullName evidence="1">Guided entry of tail-anchored proteins 1</fullName>
    </alternativeName>
</protein>
<sequence length="214" mass="24494">MPSLLVVIFVIELFVQLVNTIGAATINNLLWRIALSLPLPLSAQFAAQRKKQKEYLAIRRELNATSSQDEFAKWARLRRQHDKLLEDLEKRKKELDAAKTKFDRTLTTVRVVATRGLQWFLPFWYSREPMFWLPYGWFPYYVEWFASFPRAPLGSVSIVVWQWACTGVIKLVIETVMAVVGLIVAARQKQQEKQKAKQAVPAAGGGDSKAEEAK</sequence>
<name>GET1_NEUCR</name>